<dbReference type="EMBL" id="BA000012">
    <property type="protein sequence ID" value="BAB47912.1"/>
    <property type="molecule type" value="Genomic_DNA"/>
</dbReference>
<dbReference type="RefSeq" id="WP_010909278.1">
    <property type="nucleotide sequence ID" value="NC_002678.2"/>
</dbReference>
<dbReference type="SMR" id="Q98N51"/>
<dbReference type="GeneID" id="66684210"/>
<dbReference type="KEGG" id="mlo:mlr0300"/>
<dbReference type="eggNOG" id="COG0092">
    <property type="taxonomic scope" value="Bacteria"/>
</dbReference>
<dbReference type="HOGENOM" id="CLU_058591_0_2_5"/>
<dbReference type="Proteomes" id="UP000000552">
    <property type="component" value="Chromosome"/>
</dbReference>
<dbReference type="GO" id="GO:0022627">
    <property type="term" value="C:cytosolic small ribosomal subunit"/>
    <property type="evidence" value="ECO:0007669"/>
    <property type="project" value="TreeGrafter"/>
</dbReference>
<dbReference type="GO" id="GO:0003729">
    <property type="term" value="F:mRNA binding"/>
    <property type="evidence" value="ECO:0007669"/>
    <property type="project" value="UniProtKB-UniRule"/>
</dbReference>
<dbReference type="GO" id="GO:0019843">
    <property type="term" value="F:rRNA binding"/>
    <property type="evidence" value="ECO:0007669"/>
    <property type="project" value="UniProtKB-UniRule"/>
</dbReference>
<dbReference type="GO" id="GO:0003735">
    <property type="term" value="F:structural constituent of ribosome"/>
    <property type="evidence" value="ECO:0007669"/>
    <property type="project" value="InterPro"/>
</dbReference>
<dbReference type="GO" id="GO:0006412">
    <property type="term" value="P:translation"/>
    <property type="evidence" value="ECO:0007669"/>
    <property type="project" value="UniProtKB-UniRule"/>
</dbReference>
<dbReference type="CDD" id="cd02412">
    <property type="entry name" value="KH-II_30S_S3"/>
    <property type="match status" value="1"/>
</dbReference>
<dbReference type="FunFam" id="3.30.1140.32:FF:000009">
    <property type="entry name" value="30S ribosomal protein S3"/>
    <property type="match status" value="1"/>
</dbReference>
<dbReference type="FunFam" id="3.30.300.20:FF:000001">
    <property type="entry name" value="30S ribosomal protein S3"/>
    <property type="match status" value="1"/>
</dbReference>
<dbReference type="Gene3D" id="3.30.300.20">
    <property type="match status" value="1"/>
</dbReference>
<dbReference type="Gene3D" id="3.30.1140.32">
    <property type="entry name" value="Ribosomal protein S3, C-terminal domain"/>
    <property type="match status" value="1"/>
</dbReference>
<dbReference type="HAMAP" id="MF_01309_B">
    <property type="entry name" value="Ribosomal_uS3_B"/>
    <property type="match status" value="1"/>
</dbReference>
<dbReference type="InterPro" id="IPR004087">
    <property type="entry name" value="KH_dom"/>
</dbReference>
<dbReference type="InterPro" id="IPR015946">
    <property type="entry name" value="KH_dom-like_a/b"/>
</dbReference>
<dbReference type="InterPro" id="IPR004044">
    <property type="entry name" value="KH_dom_type_2"/>
</dbReference>
<dbReference type="InterPro" id="IPR009019">
    <property type="entry name" value="KH_sf_prok-type"/>
</dbReference>
<dbReference type="InterPro" id="IPR036419">
    <property type="entry name" value="Ribosomal_S3_C_sf"/>
</dbReference>
<dbReference type="InterPro" id="IPR005704">
    <property type="entry name" value="Ribosomal_uS3_bac-typ"/>
</dbReference>
<dbReference type="InterPro" id="IPR001351">
    <property type="entry name" value="Ribosomal_uS3_C"/>
</dbReference>
<dbReference type="InterPro" id="IPR018280">
    <property type="entry name" value="Ribosomal_uS3_CS"/>
</dbReference>
<dbReference type="NCBIfam" id="TIGR01009">
    <property type="entry name" value="rpsC_bact"/>
    <property type="match status" value="1"/>
</dbReference>
<dbReference type="PANTHER" id="PTHR11760">
    <property type="entry name" value="30S/40S RIBOSOMAL PROTEIN S3"/>
    <property type="match status" value="1"/>
</dbReference>
<dbReference type="PANTHER" id="PTHR11760:SF19">
    <property type="entry name" value="SMALL RIBOSOMAL SUBUNIT PROTEIN US3C"/>
    <property type="match status" value="1"/>
</dbReference>
<dbReference type="Pfam" id="PF07650">
    <property type="entry name" value="KH_2"/>
    <property type="match status" value="1"/>
</dbReference>
<dbReference type="Pfam" id="PF00189">
    <property type="entry name" value="Ribosomal_S3_C"/>
    <property type="match status" value="1"/>
</dbReference>
<dbReference type="SMART" id="SM00322">
    <property type="entry name" value="KH"/>
    <property type="match status" value="1"/>
</dbReference>
<dbReference type="SUPFAM" id="SSF54814">
    <property type="entry name" value="Prokaryotic type KH domain (KH-domain type II)"/>
    <property type="match status" value="1"/>
</dbReference>
<dbReference type="SUPFAM" id="SSF54821">
    <property type="entry name" value="Ribosomal protein S3 C-terminal domain"/>
    <property type="match status" value="1"/>
</dbReference>
<dbReference type="PROSITE" id="PS50823">
    <property type="entry name" value="KH_TYPE_2"/>
    <property type="match status" value="1"/>
</dbReference>
<dbReference type="PROSITE" id="PS00548">
    <property type="entry name" value="RIBOSOMAL_S3"/>
    <property type="match status" value="1"/>
</dbReference>
<accession>Q98N51</accession>
<feature type="chain" id="PRO_0000130182" description="Small ribosomal subunit protein uS3">
    <location>
        <begin position="1"/>
        <end position="241"/>
    </location>
</feature>
<feature type="domain" description="KH type-2" evidence="1">
    <location>
        <begin position="39"/>
        <end position="107"/>
    </location>
</feature>
<feature type="region of interest" description="Disordered" evidence="2">
    <location>
        <begin position="214"/>
        <end position="241"/>
    </location>
</feature>
<proteinExistence type="inferred from homology"/>
<sequence>MGQKVNPIGLRLGINRTWDSRWFANTGEYGKLLHEDIKIRKYLEKELKQAAISKVVIERPHKKCRVTIHAARPGLIIGKKGADIEKLRKKLMEMTKSETHLNIVEVRKPEIDATLVAQSIAQQLERRIAFRRAMKRAVQSAMRLGAEGIRINCSGRLGGAEIARMEWYREGRVPLHTLRADVDYGTAEANTAYGICGVKVWVFKGEILEHDPMASERRATEGDAAHGGGGDRERGRRRENA</sequence>
<organism>
    <name type="scientific">Mesorhizobium japonicum (strain LMG 29417 / CECT 9101 / MAFF 303099)</name>
    <name type="common">Mesorhizobium loti (strain MAFF 303099)</name>
    <dbReference type="NCBI Taxonomy" id="266835"/>
    <lineage>
        <taxon>Bacteria</taxon>
        <taxon>Pseudomonadati</taxon>
        <taxon>Pseudomonadota</taxon>
        <taxon>Alphaproteobacteria</taxon>
        <taxon>Hyphomicrobiales</taxon>
        <taxon>Phyllobacteriaceae</taxon>
        <taxon>Mesorhizobium</taxon>
    </lineage>
</organism>
<keyword id="KW-0687">Ribonucleoprotein</keyword>
<keyword id="KW-0689">Ribosomal protein</keyword>
<keyword id="KW-0694">RNA-binding</keyword>
<keyword id="KW-0699">rRNA-binding</keyword>
<comment type="function">
    <text evidence="1">Binds the lower part of the 30S subunit head. Binds mRNA in the 70S ribosome, positioning it for translation.</text>
</comment>
<comment type="subunit">
    <text evidence="1">Part of the 30S ribosomal subunit. Forms a tight complex with proteins S10 and S14.</text>
</comment>
<comment type="similarity">
    <text evidence="1">Belongs to the universal ribosomal protein uS3 family.</text>
</comment>
<protein>
    <recommendedName>
        <fullName evidence="1">Small ribosomal subunit protein uS3</fullName>
    </recommendedName>
    <alternativeName>
        <fullName evidence="3">30S ribosomal protein S3</fullName>
    </alternativeName>
</protein>
<reference key="1">
    <citation type="journal article" date="2000" name="DNA Res.">
        <title>Complete genome structure of the nitrogen-fixing symbiotic bacterium Mesorhizobium loti.</title>
        <authorList>
            <person name="Kaneko T."/>
            <person name="Nakamura Y."/>
            <person name="Sato S."/>
            <person name="Asamizu E."/>
            <person name="Kato T."/>
            <person name="Sasamoto S."/>
            <person name="Watanabe A."/>
            <person name="Idesawa K."/>
            <person name="Ishikawa A."/>
            <person name="Kawashima K."/>
            <person name="Kimura T."/>
            <person name="Kishida Y."/>
            <person name="Kiyokawa C."/>
            <person name="Kohara M."/>
            <person name="Matsumoto M."/>
            <person name="Matsuno A."/>
            <person name="Mochizuki Y."/>
            <person name="Nakayama S."/>
            <person name="Nakazaki N."/>
            <person name="Shimpo S."/>
            <person name="Sugimoto M."/>
            <person name="Takeuchi C."/>
            <person name="Yamada M."/>
            <person name="Tabata S."/>
        </authorList>
    </citation>
    <scope>NUCLEOTIDE SEQUENCE [LARGE SCALE GENOMIC DNA]</scope>
    <source>
        <strain>LMG 29417 / CECT 9101 / MAFF 303099</strain>
    </source>
</reference>
<evidence type="ECO:0000255" key="1">
    <source>
        <dbReference type="HAMAP-Rule" id="MF_01309"/>
    </source>
</evidence>
<evidence type="ECO:0000256" key="2">
    <source>
        <dbReference type="SAM" id="MobiDB-lite"/>
    </source>
</evidence>
<evidence type="ECO:0000305" key="3"/>
<gene>
    <name evidence="1" type="primary">rpsC</name>
    <name type="ordered locus">mlr0300</name>
</gene>
<name>RS3_RHILO</name>